<gene>
    <name evidence="1" type="primary">ihfB</name>
    <name evidence="1" type="synonym">himD</name>
    <name type="ordered locus">Plav_0147</name>
</gene>
<feature type="chain" id="PRO_1000072177" description="Integration host factor subunit beta">
    <location>
        <begin position="1"/>
        <end position="110"/>
    </location>
</feature>
<keyword id="KW-0233">DNA recombination</keyword>
<keyword id="KW-0238">DNA-binding</keyword>
<keyword id="KW-1185">Reference proteome</keyword>
<keyword id="KW-0804">Transcription</keyword>
<keyword id="KW-0805">Transcription regulation</keyword>
<keyword id="KW-0810">Translation regulation</keyword>
<name>IHFB_PARL1</name>
<proteinExistence type="inferred from homology"/>
<sequence>MIKSELVARLAQANPHLYQRDVERIVSTIFDEISAALARGDRVELRGFGAFSVKSRPARTGRNPRTGEPVHVDEKSVPFFKTGKELRERLNNADIADDKLMVDDSDDGDD</sequence>
<organism>
    <name type="scientific">Parvibaculum lavamentivorans (strain DS-1 / DSM 13023 / NCIMB 13966)</name>
    <dbReference type="NCBI Taxonomy" id="402881"/>
    <lineage>
        <taxon>Bacteria</taxon>
        <taxon>Pseudomonadati</taxon>
        <taxon>Pseudomonadota</taxon>
        <taxon>Alphaproteobacteria</taxon>
        <taxon>Hyphomicrobiales</taxon>
        <taxon>Parvibaculaceae</taxon>
        <taxon>Parvibaculum</taxon>
    </lineage>
</organism>
<accession>A7HPD7</accession>
<dbReference type="EMBL" id="CP000774">
    <property type="protein sequence ID" value="ABS61770.1"/>
    <property type="molecule type" value="Genomic_DNA"/>
</dbReference>
<dbReference type="RefSeq" id="WP_011995061.1">
    <property type="nucleotide sequence ID" value="NC_009719.1"/>
</dbReference>
<dbReference type="SMR" id="A7HPD7"/>
<dbReference type="STRING" id="402881.Plav_0147"/>
<dbReference type="KEGG" id="pla:Plav_0147"/>
<dbReference type="eggNOG" id="COG0776">
    <property type="taxonomic scope" value="Bacteria"/>
</dbReference>
<dbReference type="HOGENOM" id="CLU_105066_2_0_5"/>
<dbReference type="OrthoDB" id="9804203at2"/>
<dbReference type="Proteomes" id="UP000006377">
    <property type="component" value="Chromosome"/>
</dbReference>
<dbReference type="GO" id="GO:0005694">
    <property type="term" value="C:chromosome"/>
    <property type="evidence" value="ECO:0007669"/>
    <property type="project" value="InterPro"/>
</dbReference>
<dbReference type="GO" id="GO:0005829">
    <property type="term" value="C:cytosol"/>
    <property type="evidence" value="ECO:0007669"/>
    <property type="project" value="TreeGrafter"/>
</dbReference>
<dbReference type="GO" id="GO:0003677">
    <property type="term" value="F:DNA binding"/>
    <property type="evidence" value="ECO:0007669"/>
    <property type="project" value="UniProtKB-UniRule"/>
</dbReference>
<dbReference type="GO" id="GO:0030527">
    <property type="term" value="F:structural constituent of chromatin"/>
    <property type="evidence" value="ECO:0007669"/>
    <property type="project" value="InterPro"/>
</dbReference>
<dbReference type="GO" id="GO:0006310">
    <property type="term" value="P:DNA recombination"/>
    <property type="evidence" value="ECO:0007669"/>
    <property type="project" value="UniProtKB-UniRule"/>
</dbReference>
<dbReference type="GO" id="GO:0006355">
    <property type="term" value="P:regulation of DNA-templated transcription"/>
    <property type="evidence" value="ECO:0007669"/>
    <property type="project" value="UniProtKB-UniRule"/>
</dbReference>
<dbReference type="GO" id="GO:0006417">
    <property type="term" value="P:regulation of translation"/>
    <property type="evidence" value="ECO:0007669"/>
    <property type="project" value="UniProtKB-UniRule"/>
</dbReference>
<dbReference type="CDD" id="cd13836">
    <property type="entry name" value="IHF_B"/>
    <property type="match status" value="1"/>
</dbReference>
<dbReference type="FunFam" id="4.10.520.10:FF:000008">
    <property type="entry name" value="Integration host factor subunit beta"/>
    <property type="match status" value="1"/>
</dbReference>
<dbReference type="Gene3D" id="4.10.520.10">
    <property type="entry name" value="IHF-like DNA-binding proteins"/>
    <property type="match status" value="1"/>
</dbReference>
<dbReference type="HAMAP" id="MF_00381">
    <property type="entry name" value="IHF_beta"/>
    <property type="match status" value="1"/>
</dbReference>
<dbReference type="InterPro" id="IPR000119">
    <property type="entry name" value="Hist_DNA-bd"/>
</dbReference>
<dbReference type="InterPro" id="IPR020816">
    <property type="entry name" value="Histone-like_DNA-bd_CS"/>
</dbReference>
<dbReference type="InterPro" id="IPR010992">
    <property type="entry name" value="IHF-like_DNA-bd_dom_sf"/>
</dbReference>
<dbReference type="InterPro" id="IPR005685">
    <property type="entry name" value="IHF_beta"/>
</dbReference>
<dbReference type="NCBIfam" id="TIGR00988">
    <property type="entry name" value="hip"/>
    <property type="match status" value="1"/>
</dbReference>
<dbReference type="NCBIfam" id="NF001222">
    <property type="entry name" value="PRK00199.1"/>
    <property type="match status" value="1"/>
</dbReference>
<dbReference type="PANTHER" id="PTHR33175">
    <property type="entry name" value="DNA-BINDING PROTEIN HU"/>
    <property type="match status" value="1"/>
</dbReference>
<dbReference type="PANTHER" id="PTHR33175:SF5">
    <property type="entry name" value="INTEGRATION HOST FACTOR SUBUNIT BETA"/>
    <property type="match status" value="1"/>
</dbReference>
<dbReference type="Pfam" id="PF00216">
    <property type="entry name" value="Bac_DNA_binding"/>
    <property type="match status" value="1"/>
</dbReference>
<dbReference type="PRINTS" id="PR01727">
    <property type="entry name" value="DNABINDINGHU"/>
</dbReference>
<dbReference type="SMART" id="SM00411">
    <property type="entry name" value="BHL"/>
    <property type="match status" value="1"/>
</dbReference>
<dbReference type="SUPFAM" id="SSF47729">
    <property type="entry name" value="IHF-like DNA-binding proteins"/>
    <property type="match status" value="1"/>
</dbReference>
<dbReference type="PROSITE" id="PS00045">
    <property type="entry name" value="HISTONE_LIKE"/>
    <property type="match status" value="1"/>
</dbReference>
<comment type="function">
    <text evidence="1">This protein is one of the two subunits of integration host factor, a specific DNA-binding protein that functions in genetic recombination as well as in transcriptional and translational control.</text>
</comment>
<comment type="subunit">
    <text evidence="1">Heterodimer of an alpha and a beta chain.</text>
</comment>
<comment type="similarity">
    <text evidence="1">Belongs to the bacterial histone-like protein family.</text>
</comment>
<protein>
    <recommendedName>
        <fullName evidence="1">Integration host factor subunit beta</fullName>
        <shortName evidence="1">IHF-beta</shortName>
    </recommendedName>
</protein>
<evidence type="ECO:0000255" key="1">
    <source>
        <dbReference type="HAMAP-Rule" id="MF_00381"/>
    </source>
</evidence>
<reference key="1">
    <citation type="journal article" date="2011" name="Stand. Genomic Sci.">
        <title>Complete genome sequence of Parvibaculum lavamentivorans type strain (DS-1(T)).</title>
        <authorList>
            <person name="Schleheck D."/>
            <person name="Weiss M."/>
            <person name="Pitluck S."/>
            <person name="Bruce D."/>
            <person name="Land M.L."/>
            <person name="Han S."/>
            <person name="Saunders E."/>
            <person name="Tapia R."/>
            <person name="Detter C."/>
            <person name="Brettin T."/>
            <person name="Han J."/>
            <person name="Woyke T."/>
            <person name="Goodwin L."/>
            <person name="Pennacchio L."/>
            <person name="Nolan M."/>
            <person name="Cook A.M."/>
            <person name="Kjelleberg S."/>
            <person name="Thomas T."/>
        </authorList>
    </citation>
    <scope>NUCLEOTIDE SEQUENCE [LARGE SCALE GENOMIC DNA]</scope>
    <source>
        <strain>DS-1 / DSM 13023 / NCIMB 13966</strain>
    </source>
</reference>